<feature type="chain" id="PRO_0000427343" description="Uncharacterized protein MT0034">
    <location>
        <begin position="1"/>
        <end position="109"/>
    </location>
</feature>
<accession>P9WM94</accession>
<accession>L0T5B0</accession>
<accession>P64671</accession>
<accession>P71600</accession>
<dbReference type="EMBL" id="AE000516">
    <property type="protein sequence ID" value="AAK44257.1"/>
    <property type="molecule type" value="Genomic_DNA"/>
</dbReference>
<dbReference type="PIR" id="D70701">
    <property type="entry name" value="D70701"/>
</dbReference>
<dbReference type="RefSeq" id="WP_003400413.1">
    <property type="nucleotide sequence ID" value="NZ_KK341227.1"/>
</dbReference>
<dbReference type="SMR" id="P9WM94"/>
<dbReference type="KEGG" id="mtc:MT0034"/>
<dbReference type="PATRIC" id="fig|83331.31.peg.36"/>
<dbReference type="HOGENOM" id="CLU_176960_0_0_11"/>
<dbReference type="Proteomes" id="UP000001020">
    <property type="component" value="Chromosome"/>
</dbReference>
<dbReference type="InterPro" id="IPR024296">
    <property type="entry name" value="DUF2710"/>
</dbReference>
<dbReference type="Pfam" id="PF10921">
    <property type="entry name" value="DUF2710"/>
    <property type="match status" value="1"/>
</dbReference>
<sequence>MVSGSDSRSEPSQLSDRDLVESVLRDLSEAADKWEALVTQAETVTYSVDLGDVRAVANSDGRLLELTLHPGVMTGYAHGELADRVNLAITALRDEVEAENRARYGGRLQ</sequence>
<keyword id="KW-1185">Reference proteome</keyword>
<reference key="1">
    <citation type="journal article" date="2002" name="J. Bacteriol.">
        <title>Whole-genome comparison of Mycobacterium tuberculosis clinical and laboratory strains.</title>
        <authorList>
            <person name="Fleischmann R.D."/>
            <person name="Alland D."/>
            <person name="Eisen J.A."/>
            <person name="Carpenter L."/>
            <person name="White O."/>
            <person name="Peterson J.D."/>
            <person name="DeBoy R.T."/>
            <person name="Dodson R.J."/>
            <person name="Gwinn M.L."/>
            <person name="Haft D.H."/>
            <person name="Hickey E.K."/>
            <person name="Kolonay J.F."/>
            <person name="Nelson W.C."/>
            <person name="Umayam L.A."/>
            <person name="Ermolaeva M.D."/>
            <person name="Salzberg S.L."/>
            <person name="Delcher A."/>
            <person name="Utterback T.R."/>
            <person name="Weidman J.F."/>
            <person name="Khouri H.M."/>
            <person name="Gill J."/>
            <person name="Mikula A."/>
            <person name="Bishai W."/>
            <person name="Jacobs W.R. Jr."/>
            <person name="Venter J.C."/>
            <person name="Fraser C.M."/>
        </authorList>
    </citation>
    <scope>NUCLEOTIDE SEQUENCE [LARGE SCALE GENOMIC DNA]</scope>
    <source>
        <strain>CDC 1551 / Oshkosh</strain>
    </source>
</reference>
<name>Y030_MYCTO</name>
<gene>
    <name type="ordered locus">MT0034</name>
</gene>
<proteinExistence type="predicted"/>
<organism>
    <name type="scientific">Mycobacterium tuberculosis (strain CDC 1551 / Oshkosh)</name>
    <dbReference type="NCBI Taxonomy" id="83331"/>
    <lineage>
        <taxon>Bacteria</taxon>
        <taxon>Bacillati</taxon>
        <taxon>Actinomycetota</taxon>
        <taxon>Actinomycetes</taxon>
        <taxon>Mycobacteriales</taxon>
        <taxon>Mycobacteriaceae</taxon>
        <taxon>Mycobacterium</taxon>
        <taxon>Mycobacterium tuberculosis complex</taxon>
    </lineage>
</organism>
<protein>
    <recommendedName>
        <fullName>Uncharacterized protein MT0034</fullName>
    </recommendedName>
</protein>